<evidence type="ECO:0000255" key="1">
    <source>
        <dbReference type="HAMAP-Rule" id="MF_00436"/>
    </source>
</evidence>
<evidence type="ECO:0000255" key="2">
    <source>
        <dbReference type="PROSITE-ProRule" id="PRU01346"/>
    </source>
</evidence>
<organism>
    <name type="scientific">Bacillus cereus (strain AH187)</name>
    <dbReference type="NCBI Taxonomy" id="405534"/>
    <lineage>
        <taxon>Bacteria</taxon>
        <taxon>Bacillati</taxon>
        <taxon>Bacillota</taxon>
        <taxon>Bacilli</taxon>
        <taxon>Bacillales</taxon>
        <taxon>Bacillaceae</taxon>
        <taxon>Bacillus</taxon>
        <taxon>Bacillus cereus group</taxon>
    </lineage>
</organism>
<proteinExistence type="inferred from homology"/>
<name>HFQ_BACC7</name>
<comment type="function">
    <text evidence="1">RNA chaperone that binds small regulatory RNA (sRNAs) and mRNAs to facilitate mRNA translational regulation in response to envelope stress, environmental stress and changes in metabolite concentrations. Also binds with high specificity to tRNAs.</text>
</comment>
<comment type="subunit">
    <text evidence="1">Homohexamer.</text>
</comment>
<comment type="similarity">
    <text evidence="1">Belongs to the Hfq family.</text>
</comment>
<reference key="1">
    <citation type="submission" date="2008-10" db="EMBL/GenBank/DDBJ databases">
        <title>Genome sequence of Bacillus cereus AH187.</title>
        <authorList>
            <person name="Dodson R.J."/>
            <person name="Durkin A.S."/>
            <person name="Rosovitz M.J."/>
            <person name="Rasko D.A."/>
            <person name="Kolsto A.B."/>
            <person name="Okstad O.A."/>
            <person name="Ravel J."/>
            <person name="Sutton G."/>
        </authorList>
    </citation>
    <scope>NUCLEOTIDE SEQUENCE [LARGE SCALE GENOMIC DNA]</scope>
    <source>
        <strain>AH187</strain>
    </source>
</reference>
<protein>
    <recommendedName>
        <fullName evidence="1">RNA-binding protein Hfq</fullName>
    </recommendedName>
</protein>
<feature type="chain" id="PRO_1000190302" description="RNA-binding protein Hfq">
    <location>
        <begin position="1"/>
        <end position="74"/>
    </location>
</feature>
<feature type="domain" description="Sm" evidence="2">
    <location>
        <begin position="9"/>
        <end position="69"/>
    </location>
</feature>
<sequence length="74" mass="8646">MKQSINIQDQFLNQLRKENTFVTLYLLNGFQLRGLIKGFDNFTVLLETEGKQQLIYKHAISTFVPQKNVSIELE</sequence>
<dbReference type="EMBL" id="CP001177">
    <property type="protein sequence ID" value="ACJ80086.1"/>
    <property type="molecule type" value="Genomic_DNA"/>
</dbReference>
<dbReference type="SMR" id="B7HKR8"/>
<dbReference type="KEGG" id="bcr:BCAH187_A3763"/>
<dbReference type="HOGENOM" id="CLU_113688_3_0_9"/>
<dbReference type="Proteomes" id="UP000002214">
    <property type="component" value="Chromosome"/>
</dbReference>
<dbReference type="GO" id="GO:0005829">
    <property type="term" value="C:cytosol"/>
    <property type="evidence" value="ECO:0007669"/>
    <property type="project" value="TreeGrafter"/>
</dbReference>
<dbReference type="GO" id="GO:0003723">
    <property type="term" value="F:RNA binding"/>
    <property type="evidence" value="ECO:0007669"/>
    <property type="project" value="UniProtKB-UniRule"/>
</dbReference>
<dbReference type="GO" id="GO:0006355">
    <property type="term" value="P:regulation of DNA-templated transcription"/>
    <property type="evidence" value="ECO:0007669"/>
    <property type="project" value="InterPro"/>
</dbReference>
<dbReference type="GO" id="GO:0043487">
    <property type="term" value="P:regulation of RNA stability"/>
    <property type="evidence" value="ECO:0007669"/>
    <property type="project" value="TreeGrafter"/>
</dbReference>
<dbReference type="GO" id="GO:0045974">
    <property type="term" value="P:regulation of translation, ncRNA-mediated"/>
    <property type="evidence" value="ECO:0007669"/>
    <property type="project" value="TreeGrafter"/>
</dbReference>
<dbReference type="CDD" id="cd01716">
    <property type="entry name" value="Hfq"/>
    <property type="match status" value="1"/>
</dbReference>
<dbReference type="FunFam" id="2.30.30.100:FF:000012">
    <property type="entry name" value="RNA-binding protein Hfq"/>
    <property type="match status" value="1"/>
</dbReference>
<dbReference type="Gene3D" id="2.30.30.100">
    <property type="match status" value="1"/>
</dbReference>
<dbReference type="HAMAP" id="MF_00436">
    <property type="entry name" value="Hfq"/>
    <property type="match status" value="1"/>
</dbReference>
<dbReference type="InterPro" id="IPR005001">
    <property type="entry name" value="Hfq"/>
</dbReference>
<dbReference type="InterPro" id="IPR010920">
    <property type="entry name" value="LSM_dom_sf"/>
</dbReference>
<dbReference type="InterPro" id="IPR047575">
    <property type="entry name" value="Sm"/>
</dbReference>
<dbReference type="NCBIfam" id="TIGR02383">
    <property type="entry name" value="Hfq"/>
    <property type="match status" value="1"/>
</dbReference>
<dbReference type="NCBIfam" id="NF001602">
    <property type="entry name" value="PRK00395.1"/>
    <property type="match status" value="1"/>
</dbReference>
<dbReference type="PANTHER" id="PTHR34772">
    <property type="entry name" value="RNA-BINDING PROTEIN HFQ"/>
    <property type="match status" value="1"/>
</dbReference>
<dbReference type="PANTHER" id="PTHR34772:SF1">
    <property type="entry name" value="RNA-BINDING PROTEIN HFQ"/>
    <property type="match status" value="1"/>
</dbReference>
<dbReference type="Pfam" id="PF17209">
    <property type="entry name" value="Hfq"/>
    <property type="match status" value="1"/>
</dbReference>
<dbReference type="SUPFAM" id="SSF50182">
    <property type="entry name" value="Sm-like ribonucleoproteins"/>
    <property type="match status" value="1"/>
</dbReference>
<dbReference type="PROSITE" id="PS52002">
    <property type="entry name" value="SM"/>
    <property type="match status" value="1"/>
</dbReference>
<gene>
    <name evidence="1" type="primary">hfq</name>
    <name type="ordered locus">BCAH187_A3763</name>
</gene>
<keyword id="KW-0694">RNA-binding</keyword>
<keyword id="KW-0346">Stress response</keyword>
<accession>B7HKR8</accession>